<gene>
    <name type="ordered locus">MT2332</name>
</gene>
<name>Y2271_MYCTO</name>
<proteinExistence type="predicted"/>
<dbReference type="EMBL" id="AE000516">
    <property type="protein sequence ID" value="AAK46615.1"/>
    <property type="molecule type" value="Genomic_DNA"/>
</dbReference>
<dbReference type="PIR" id="C70730">
    <property type="entry name" value="C70730"/>
</dbReference>
<dbReference type="RefSeq" id="WP_003899242.1">
    <property type="nucleotide sequence ID" value="NZ_KK341227.1"/>
</dbReference>
<dbReference type="SMR" id="P9WLF6"/>
<dbReference type="KEGG" id="mtc:MT2332"/>
<dbReference type="PATRIC" id="fig|83331.31.peg.2508"/>
<dbReference type="HOGENOM" id="CLU_180056_0_0_11"/>
<dbReference type="Proteomes" id="UP000001020">
    <property type="component" value="Chromosome"/>
</dbReference>
<dbReference type="InterPro" id="IPR024248">
    <property type="entry name" value="DUF2695"/>
</dbReference>
<dbReference type="Pfam" id="PF10905">
    <property type="entry name" value="DUF2695"/>
    <property type="match status" value="1"/>
</dbReference>
<feature type="chain" id="PRO_0000427487" description="Uncharacterized protein MT2332">
    <location>
        <begin position="1"/>
        <end position="99"/>
    </location>
</feature>
<protein>
    <recommendedName>
        <fullName>Uncharacterized protein MT2332</fullName>
    </recommendedName>
</protein>
<reference key="1">
    <citation type="journal article" date="2002" name="J. Bacteriol.">
        <title>Whole-genome comparison of Mycobacterium tuberculosis clinical and laboratory strains.</title>
        <authorList>
            <person name="Fleischmann R.D."/>
            <person name="Alland D."/>
            <person name="Eisen J.A."/>
            <person name="Carpenter L."/>
            <person name="White O."/>
            <person name="Peterson J.D."/>
            <person name="DeBoy R.T."/>
            <person name="Dodson R.J."/>
            <person name="Gwinn M.L."/>
            <person name="Haft D.H."/>
            <person name="Hickey E.K."/>
            <person name="Kolonay J.F."/>
            <person name="Nelson W.C."/>
            <person name="Umayam L.A."/>
            <person name="Ermolaeva M.D."/>
            <person name="Salzberg S.L."/>
            <person name="Delcher A."/>
            <person name="Utterback T.R."/>
            <person name="Weidman J.F."/>
            <person name="Khouri H.M."/>
            <person name="Gill J."/>
            <person name="Mikula A."/>
            <person name="Bishai W."/>
            <person name="Jacobs W.R. Jr."/>
            <person name="Venter J.C."/>
            <person name="Fraser C.M."/>
        </authorList>
    </citation>
    <scope>NUCLEOTIDE SEQUENCE [LARGE SCALE GENOMIC DNA]</scope>
    <source>
        <strain>CDC 1551 / Oshkosh</strain>
    </source>
</reference>
<sequence>MTTPPDKARRRFLRDAYKNAERVARTALLTIDQDQLEQLLDYVDERLGEQPCDHTARHAQRWAQSHRIEWETLAEGLQEFGGYCDCEIVMNVEPEAIFG</sequence>
<accession>P9WLF6</accession>
<accession>L0TBT1</accession>
<accession>P64967</accession>
<accession>Q50692</accession>
<keyword id="KW-1185">Reference proteome</keyword>
<organism>
    <name type="scientific">Mycobacterium tuberculosis (strain CDC 1551 / Oshkosh)</name>
    <dbReference type="NCBI Taxonomy" id="83331"/>
    <lineage>
        <taxon>Bacteria</taxon>
        <taxon>Bacillati</taxon>
        <taxon>Actinomycetota</taxon>
        <taxon>Actinomycetes</taxon>
        <taxon>Mycobacteriales</taxon>
        <taxon>Mycobacteriaceae</taxon>
        <taxon>Mycobacterium</taxon>
        <taxon>Mycobacterium tuberculosis complex</taxon>
    </lineage>
</organism>